<accession>P51595</accession>
<dbReference type="EC" id="3.5.4.16"/>
<dbReference type="EMBL" id="U16156">
    <property type="protein sequence ID" value="AAB63946.1"/>
    <property type="molecule type" value="Genomic_DNA"/>
</dbReference>
<dbReference type="EMBL" id="AE005672">
    <property type="protein sequence ID" value="AAK74469.1"/>
    <property type="molecule type" value="Genomic_DNA"/>
</dbReference>
<dbReference type="PIR" id="D95034">
    <property type="entry name" value="D95034"/>
</dbReference>
<dbReference type="PIR" id="D97905">
    <property type="entry name" value="D97905"/>
</dbReference>
<dbReference type="RefSeq" id="WP_000380916.1">
    <property type="nucleotide sequence ID" value="NZ_CP155539.1"/>
</dbReference>
<dbReference type="SMR" id="P51595"/>
<dbReference type="PaxDb" id="170187-SP_0291"/>
<dbReference type="EnsemblBacteria" id="AAK74469">
    <property type="protein sequence ID" value="AAK74469"/>
    <property type="gene ID" value="SP_0291"/>
</dbReference>
<dbReference type="GeneID" id="93738559"/>
<dbReference type="KEGG" id="spn:SP_0291"/>
<dbReference type="eggNOG" id="COG0302">
    <property type="taxonomic scope" value="Bacteria"/>
</dbReference>
<dbReference type="PhylomeDB" id="P51595"/>
<dbReference type="BioCyc" id="SPNE170187:G1FZB-300-MONOMER"/>
<dbReference type="UniPathway" id="UPA00848">
    <property type="reaction ID" value="UER00151"/>
</dbReference>
<dbReference type="Proteomes" id="UP000000585">
    <property type="component" value="Chromosome"/>
</dbReference>
<dbReference type="GO" id="GO:0005737">
    <property type="term" value="C:cytoplasm"/>
    <property type="evidence" value="ECO:0007669"/>
    <property type="project" value="TreeGrafter"/>
</dbReference>
<dbReference type="GO" id="GO:0005525">
    <property type="term" value="F:GTP binding"/>
    <property type="evidence" value="ECO:0007669"/>
    <property type="project" value="UniProtKB-KW"/>
</dbReference>
<dbReference type="GO" id="GO:0003934">
    <property type="term" value="F:GTP cyclohydrolase I activity"/>
    <property type="evidence" value="ECO:0007669"/>
    <property type="project" value="UniProtKB-UniRule"/>
</dbReference>
<dbReference type="GO" id="GO:0008270">
    <property type="term" value="F:zinc ion binding"/>
    <property type="evidence" value="ECO:0007669"/>
    <property type="project" value="UniProtKB-UniRule"/>
</dbReference>
<dbReference type="GO" id="GO:0006730">
    <property type="term" value="P:one-carbon metabolic process"/>
    <property type="evidence" value="ECO:0007669"/>
    <property type="project" value="UniProtKB-UniRule"/>
</dbReference>
<dbReference type="GO" id="GO:0006729">
    <property type="term" value="P:tetrahydrobiopterin biosynthetic process"/>
    <property type="evidence" value="ECO:0007669"/>
    <property type="project" value="TreeGrafter"/>
</dbReference>
<dbReference type="GO" id="GO:0046654">
    <property type="term" value="P:tetrahydrofolate biosynthetic process"/>
    <property type="evidence" value="ECO:0007669"/>
    <property type="project" value="UniProtKB-UniRule"/>
</dbReference>
<dbReference type="CDD" id="cd00642">
    <property type="entry name" value="GTP_cyclohydro1"/>
    <property type="match status" value="1"/>
</dbReference>
<dbReference type="FunFam" id="1.10.286.10:FF:000001">
    <property type="entry name" value="GTP cyclohydrolase 1"/>
    <property type="match status" value="1"/>
</dbReference>
<dbReference type="FunFam" id="3.30.1130.10:FF:000001">
    <property type="entry name" value="GTP cyclohydrolase 1"/>
    <property type="match status" value="1"/>
</dbReference>
<dbReference type="Gene3D" id="1.10.286.10">
    <property type="match status" value="1"/>
</dbReference>
<dbReference type="Gene3D" id="3.30.1130.10">
    <property type="match status" value="1"/>
</dbReference>
<dbReference type="HAMAP" id="MF_00223">
    <property type="entry name" value="FolE"/>
    <property type="match status" value="1"/>
</dbReference>
<dbReference type="InterPro" id="IPR043133">
    <property type="entry name" value="GTP-CH-I_C/QueF"/>
</dbReference>
<dbReference type="InterPro" id="IPR043134">
    <property type="entry name" value="GTP-CH-I_N"/>
</dbReference>
<dbReference type="InterPro" id="IPR001474">
    <property type="entry name" value="GTP_CycHdrlase_I"/>
</dbReference>
<dbReference type="InterPro" id="IPR018234">
    <property type="entry name" value="GTP_CycHdrlase_I_CS"/>
</dbReference>
<dbReference type="InterPro" id="IPR020602">
    <property type="entry name" value="GTP_CycHdrlase_I_dom"/>
</dbReference>
<dbReference type="NCBIfam" id="TIGR00063">
    <property type="entry name" value="folE"/>
    <property type="match status" value="1"/>
</dbReference>
<dbReference type="NCBIfam" id="NF006825">
    <property type="entry name" value="PRK09347.1-2"/>
    <property type="match status" value="1"/>
</dbReference>
<dbReference type="NCBIfam" id="NF006826">
    <property type="entry name" value="PRK09347.1-3"/>
    <property type="match status" value="1"/>
</dbReference>
<dbReference type="PANTHER" id="PTHR11109:SF7">
    <property type="entry name" value="GTP CYCLOHYDROLASE 1"/>
    <property type="match status" value="1"/>
</dbReference>
<dbReference type="PANTHER" id="PTHR11109">
    <property type="entry name" value="GTP CYCLOHYDROLASE I"/>
    <property type="match status" value="1"/>
</dbReference>
<dbReference type="Pfam" id="PF01227">
    <property type="entry name" value="GTP_cyclohydroI"/>
    <property type="match status" value="1"/>
</dbReference>
<dbReference type="SUPFAM" id="SSF55620">
    <property type="entry name" value="Tetrahydrobiopterin biosynthesis enzymes-like"/>
    <property type="match status" value="1"/>
</dbReference>
<dbReference type="PROSITE" id="PS00859">
    <property type="entry name" value="GTP_CYCLOHYDROL_1_1"/>
    <property type="match status" value="1"/>
</dbReference>
<dbReference type="PROSITE" id="PS00860">
    <property type="entry name" value="GTP_CYCLOHYDROL_1_2"/>
    <property type="match status" value="1"/>
</dbReference>
<feature type="chain" id="PRO_0000119449" description="GTP cyclohydrolase 1">
    <location>
        <begin position="1"/>
        <end position="184"/>
    </location>
</feature>
<feature type="binding site" evidence="1">
    <location>
        <position position="75"/>
    </location>
    <ligand>
        <name>Zn(2+)</name>
        <dbReference type="ChEBI" id="CHEBI:29105"/>
    </ligand>
</feature>
<feature type="binding site" evidence="1">
    <location>
        <position position="78"/>
    </location>
    <ligand>
        <name>Zn(2+)</name>
        <dbReference type="ChEBI" id="CHEBI:29105"/>
    </ligand>
</feature>
<feature type="binding site" evidence="1">
    <location>
        <position position="146"/>
    </location>
    <ligand>
        <name>Zn(2+)</name>
        <dbReference type="ChEBI" id="CHEBI:29105"/>
    </ligand>
</feature>
<feature type="sequence conflict" description="In Ref. 1; AAB63946." evidence="2" ref="1">
    <original>V</original>
    <variation>I</variation>
    <location>
        <position position="139"/>
    </location>
</feature>
<sequence>MDTQKIEAAVKMIIEAVGEDANREGLQETPARVARMYQEIFSGLGQTAEEHLSKSFEIIDDNMVVEKDIFFHTMCEHHFLPFYGRAHIAYIPDGRVAGLSKLARTVEVYSKKPQIQERLNIEVADALMDYLGAKGAFVVIEAEHMCMSMRGVRKPGTATLTTVARGLFETDKDLRDQAYRLMGL</sequence>
<proteinExistence type="inferred from homology"/>
<protein>
    <recommendedName>
        <fullName>GTP cyclohydrolase 1</fullName>
        <ecNumber>3.5.4.16</ecNumber>
    </recommendedName>
    <alternativeName>
        <fullName>GTP cyclohydrolase I</fullName>
        <shortName>GTP-CH-I</shortName>
    </alternativeName>
</protein>
<evidence type="ECO:0000250" key="1"/>
<evidence type="ECO:0000305" key="2"/>
<keyword id="KW-0342">GTP-binding</keyword>
<keyword id="KW-0378">Hydrolase</keyword>
<keyword id="KW-0479">Metal-binding</keyword>
<keyword id="KW-0547">Nucleotide-binding</keyword>
<keyword id="KW-0554">One-carbon metabolism</keyword>
<keyword id="KW-1185">Reference proteome</keyword>
<keyword id="KW-0862">Zinc</keyword>
<reference key="1">
    <citation type="journal article" date="1995" name="J. Bacteriol.">
        <title>A cluster of four genes encoding enzymes for five steps in the folate biosynthetic pathway of Streptococcus pneumoniae.</title>
        <authorList>
            <person name="Lacks S.A."/>
            <person name="Greenberg B."/>
            <person name="Lopez P."/>
        </authorList>
    </citation>
    <scope>NUCLEOTIDE SEQUENCE [GENOMIC DNA]</scope>
    <source>
        <strain>772</strain>
    </source>
</reference>
<reference key="2">
    <citation type="journal article" date="2001" name="Science">
        <title>Complete genome sequence of a virulent isolate of Streptococcus pneumoniae.</title>
        <authorList>
            <person name="Tettelin H."/>
            <person name="Nelson K.E."/>
            <person name="Paulsen I.T."/>
            <person name="Eisen J.A."/>
            <person name="Read T.D."/>
            <person name="Peterson S.N."/>
            <person name="Heidelberg J.F."/>
            <person name="DeBoy R.T."/>
            <person name="Haft D.H."/>
            <person name="Dodson R.J."/>
            <person name="Durkin A.S."/>
            <person name="Gwinn M.L."/>
            <person name="Kolonay J.F."/>
            <person name="Nelson W.C."/>
            <person name="Peterson J.D."/>
            <person name="Umayam L.A."/>
            <person name="White O."/>
            <person name="Salzberg S.L."/>
            <person name="Lewis M.R."/>
            <person name="Radune D."/>
            <person name="Holtzapple E.K."/>
            <person name="Khouri H.M."/>
            <person name="Wolf A.M."/>
            <person name="Utterback T.R."/>
            <person name="Hansen C.L."/>
            <person name="McDonald L.A."/>
            <person name="Feldblyum T.V."/>
            <person name="Angiuoli S.V."/>
            <person name="Dickinson T."/>
            <person name="Hickey E.K."/>
            <person name="Holt I.E."/>
            <person name="Loftus B.J."/>
            <person name="Yang F."/>
            <person name="Smith H.O."/>
            <person name="Venter J.C."/>
            <person name="Dougherty B.A."/>
            <person name="Morrison D.A."/>
            <person name="Hollingshead S.K."/>
            <person name="Fraser C.M."/>
        </authorList>
    </citation>
    <scope>NUCLEOTIDE SEQUENCE [LARGE SCALE GENOMIC DNA]</scope>
    <source>
        <strain>ATCC BAA-334 / TIGR4</strain>
    </source>
</reference>
<organism>
    <name type="scientific">Streptococcus pneumoniae serotype 4 (strain ATCC BAA-334 / TIGR4)</name>
    <dbReference type="NCBI Taxonomy" id="170187"/>
    <lineage>
        <taxon>Bacteria</taxon>
        <taxon>Bacillati</taxon>
        <taxon>Bacillota</taxon>
        <taxon>Bacilli</taxon>
        <taxon>Lactobacillales</taxon>
        <taxon>Streptococcaceae</taxon>
        <taxon>Streptococcus</taxon>
    </lineage>
</organism>
<comment type="catalytic activity">
    <reaction>
        <text>GTP + H2O = 7,8-dihydroneopterin 3'-triphosphate + formate + H(+)</text>
        <dbReference type="Rhea" id="RHEA:17473"/>
        <dbReference type="ChEBI" id="CHEBI:15377"/>
        <dbReference type="ChEBI" id="CHEBI:15378"/>
        <dbReference type="ChEBI" id="CHEBI:15740"/>
        <dbReference type="ChEBI" id="CHEBI:37565"/>
        <dbReference type="ChEBI" id="CHEBI:58462"/>
        <dbReference type="EC" id="3.5.4.16"/>
    </reaction>
</comment>
<comment type="pathway">
    <text>Cofactor biosynthesis; 7,8-dihydroneopterin triphosphate biosynthesis; 7,8-dihydroneopterin triphosphate from GTP: step 1/1.</text>
</comment>
<comment type="subunit">
    <text evidence="1">Toroid-shaped homodecamer, composed of two pentamers of five dimers.</text>
</comment>
<comment type="similarity">
    <text evidence="2">Belongs to the GTP cyclohydrolase I family.</text>
</comment>
<gene>
    <name type="primary">folE</name>
    <name type="synonym">sulC</name>
    <name type="ordered locus">SP_0291</name>
</gene>
<name>GCH1_STRPN</name>